<name>PB1F2_I77AB</name>
<feature type="chain" id="PRO_0000278727" description="Protein PB1-F2">
    <location>
        <begin position="1"/>
        <end position="57"/>
    </location>
</feature>
<feature type="region of interest" description="Disordered" evidence="2">
    <location>
        <begin position="1"/>
        <end position="36"/>
    </location>
</feature>
<feature type="compositionally biased region" description="Polar residues" evidence="2">
    <location>
        <begin position="1"/>
        <end position="19"/>
    </location>
</feature>
<feature type="compositionally biased region" description="Basic and acidic residues" evidence="2">
    <location>
        <begin position="20"/>
        <end position="34"/>
    </location>
</feature>
<reference key="1">
    <citation type="submission" date="2006-03" db="EMBL/GenBank/DDBJ databases">
        <title>The NIAID influenza genome sequencing project.</title>
        <authorList>
            <person name="Ghedin E."/>
            <person name="Spiro D."/>
            <person name="Miller N."/>
            <person name="Zaborsky J."/>
            <person name="Feldblyum T."/>
            <person name="Subbu V."/>
            <person name="Shumway M."/>
            <person name="Sparenborg J."/>
            <person name="Groveman L."/>
            <person name="Halpin R."/>
            <person name="Sitz J."/>
            <person name="Koo H."/>
            <person name="Salzberg S.L."/>
            <person name="Webster R.G."/>
            <person name="Hoffmann E."/>
            <person name="Krauss S."/>
            <person name="Naeve C."/>
            <person name="Bao Y."/>
            <person name="Bolotov P."/>
            <person name="Dernovoy D."/>
            <person name="Kiryutin B."/>
            <person name="Lipman D.J."/>
            <person name="Tatusova T."/>
        </authorList>
    </citation>
    <scope>NUCLEOTIDE SEQUENCE [GENOMIC RNA]</scope>
</reference>
<proteinExistence type="inferred from homology"/>
<protein>
    <recommendedName>
        <fullName evidence="1">Protein PB1-F2</fullName>
    </recommendedName>
</protein>
<keyword id="KW-1035">Host cytoplasm</keyword>
<keyword id="KW-1048">Host nucleus</keyword>
<evidence type="ECO:0000255" key="1">
    <source>
        <dbReference type="HAMAP-Rule" id="MF_04064"/>
    </source>
</evidence>
<evidence type="ECO:0000256" key="2">
    <source>
        <dbReference type="SAM" id="MobiDB-lite"/>
    </source>
</evidence>
<organismHost>
    <name type="scientific">Aves</name>
    <dbReference type="NCBI Taxonomy" id="8782"/>
</organismHost>
<organismHost>
    <name type="scientific">Homo sapiens</name>
    <name type="common">Human</name>
    <dbReference type="NCBI Taxonomy" id="9606"/>
</organismHost>
<organismHost>
    <name type="scientific">Sus scrofa</name>
    <name type="common">Pig</name>
    <dbReference type="NCBI Taxonomy" id="9823"/>
</organismHost>
<comment type="function">
    <text evidence="1">May play an important role in promoting lung pathology in both primary viral infection and secondary bacterial infection.</text>
</comment>
<comment type="subcellular location">
    <subcellularLocation>
        <location evidence="1">Host nucleus</location>
    </subcellularLocation>
    <subcellularLocation>
        <location evidence="1">Host cytoplasm</location>
        <location evidence="1">Host cytosol</location>
    </subcellularLocation>
</comment>
<comment type="miscellaneous">
    <text>Is not encoded in all strains, and seems to be dispensable for replication.</text>
</comment>
<comment type="similarity">
    <text evidence="1">Belongs to the influenza viruses PB1-F2 family.</text>
</comment>
<dbReference type="EMBL" id="CY010378">
    <property type="protein sequence ID" value="ABD95359.1"/>
    <property type="molecule type" value="Genomic_RNA"/>
</dbReference>
<dbReference type="SMR" id="Q1WP00"/>
<dbReference type="Proteomes" id="UP000007793">
    <property type="component" value="Genome"/>
</dbReference>
<dbReference type="GO" id="GO:0044164">
    <property type="term" value="C:host cell cytosol"/>
    <property type="evidence" value="ECO:0007669"/>
    <property type="project" value="UniProtKB-SubCell"/>
</dbReference>
<dbReference type="GO" id="GO:0042025">
    <property type="term" value="C:host cell nucleus"/>
    <property type="evidence" value="ECO:0007669"/>
    <property type="project" value="UniProtKB-SubCell"/>
</dbReference>
<dbReference type="GO" id="GO:0016020">
    <property type="term" value="C:membrane"/>
    <property type="evidence" value="ECO:0007669"/>
    <property type="project" value="UniProtKB-UniRule"/>
</dbReference>
<dbReference type="GO" id="GO:0039545">
    <property type="term" value="P:symbiont-mediated suppression of host cytoplasmic pattern recognition receptor signaling pathway via inhibition of MAVS activity"/>
    <property type="evidence" value="ECO:0000250"/>
    <property type="project" value="UniProtKB"/>
</dbReference>
<dbReference type="HAMAP" id="MF_04064">
    <property type="entry name" value="INFV_PB1F2"/>
    <property type="match status" value="1"/>
</dbReference>
<dbReference type="InterPro" id="IPR021045">
    <property type="entry name" value="Flu_proapoptotic_PB1-F2"/>
</dbReference>
<dbReference type="Pfam" id="PF11986">
    <property type="entry name" value="PB1-F2"/>
    <property type="match status" value="1"/>
</dbReference>
<sequence length="57" mass="6540">MGQEQGTPWIQSTGHISTQKGEDGQKTPKLEHRNSTRLMGHYQKTMNQVVMPKQIVY</sequence>
<organism>
    <name type="scientific">Influenza A virus (strain A/USSR/90/1977 H1N1)</name>
    <dbReference type="NCBI Taxonomy" id="381516"/>
    <lineage>
        <taxon>Viruses</taxon>
        <taxon>Riboviria</taxon>
        <taxon>Orthornavirae</taxon>
        <taxon>Negarnaviricota</taxon>
        <taxon>Polyploviricotina</taxon>
        <taxon>Insthoviricetes</taxon>
        <taxon>Articulavirales</taxon>
        <taxon>Orthomyxoviridae</taxon>
        <taxon>Alphainfluenzavirus</taxon>
        <taxon>Alphainfluenzavirus influenzae</taxon>
        <taxon>Influenza A virus</taxon>
    </lineage>
</organism>
<accession>Q1WP00</accession>
<gene>
    <name evidence="1" type="primary">PB1</name>
</gene>